<reference key="1">
    <citation type="submission" date="2005-09" db="EMBL/GenBank/DDBJ databases">
        <authorList>
            <consortium name="NIH - Mammalian Gene Collection (MGC) project"/>
        </authorList>
    </citation>
    <scope>NUCLEOTIDE SEQUENCE [LARGE SCALE MRNA]</scope>
    <source>
        <strain>Hereford</strain>
        <tissue>Uterus</tissue>
    </source>
</reference>
<proteinExistence type="evidence at transcript level"/>
<protein>
    <recommendedName>
        <fullName>Putative hydrolase DDAH2</fullName>
        <ecNumber evidence="2">3.-.-.-</ecNumber>
    </recommendedName>
    <alternativeName>
        <fullName>DDAHII</fullName>
    </alternativeName>
    <alternativeName>
        <fullName>Inactive N(G),N(G)-dimethylarginine dimethylaminohydrolase 2</fullName>
        <shortName>DDAH-2</shortName>
        <shortName>Inactive dimethylarginine dimethylaminohydrolase 2</shortName>
    </alternativeName>
</protein>
<organism>
    <name type="scientific">Bos taurus</name>
    <name type="common">Bovine</name>
    <dbReference type="NCBI Taxonomy" id="9913"/>
    <lineage>
        <taxon>Eukaryota</taxon>
        <taxon>Metazoa</taxon>
        <taxon>Chordata</taxon>
        <taxon>Craniata</taxon>
        <taxon>Vertebrata</taxon>
        <taxon>Euteleostomi</taxon>
        <taxon>Mammalia</taxon>
        <taxon>Eutheria</taxon>
        <taxon>Laurasiatheria</taxon>
        <taxon>Artiodactyla</taxon>
        <taxon>Ruminantia</taxon>
        <taxon>Pecora</taxon>
        <taxon>Bovidae</taxon>
        <taxon>Bovinae</taxon>
        <taxon>Bos</taxon>
    </lineage>
</organism>
<sequence>MGTPGEGLGRCSHALIRGVPESLASGEGAAAGLPALDLAKAQREHGVLGGKLRQRLGLQLVELPPEESLPLGPLLGDTAVIQGDTALITRPWSPARRPEVDGVRKALQDLGLRIVEMGDENATLDGTDVLFTGREFFVGLSKWTNHRGAEIVADTFRDFAVSTVPVTSTSHLRGLCGMGGPRTVVAGSSEAAQKAVRAMAVLTDHPYASLTLPDDAAADCLFLRPGQPGLPPFLLHRGGGDLPNSQEALQKLSDVTLVPVSCSELEKAGAGLSSLCLVLSTRPHN</sequence>
<evidence type="ECO:0000250" key="1"/>
<evidence type="ECO:0000250" key="2">
    <source>
        <dbReference type="UniProtKB" id="O95865"/>
    </source>
</evidence>
<evidence type="ECO:0000250" key="3">
    <source>
        <dbReference type="UniProtKB" id="Q99LD8"/>
    </source>
</evidence>
<evidence type="ECO:0000255" key="4"/>
<evidence type="ECO:0000305" key="5"/>
<accession>Q3SX44</accession>
<keyword id="KW-0963">Cytoplasm</keyword>
<keyword id="KW-0378">Hydrolase</keyword>
<keyword id="KW-0496">Mitochondrion</keyword>
<keyword id="KW-1185">Reference proteome</keyword>
<feature type="chain" id="PRO_0000270759" description="Putative hydrolase DDAH2">
    <location>
        <begin position="1"/>
        <end position="285"/>
    </location>
</feature>
<feature type="active site" description="Proton donor" evidence="1">
    <location>
        <position position="171"/>
    </location>
</feature>
<feature type="active site" description="Nucleophile" evidence="4">
    <location>
        <position position="276"/>
    </location>
</feature>
<name>DDAH2_BOVIN</name>
<gene>
    <name type="primary">DDAH2</name>
</gene>
<comment type="function">
    <text evidence="2 3">Putative hydrolase with unknown substrate. Does not hydrolyze N(G),N(G)-dimethyl-L-arginine (ADMA) which acts as an inhibitor of NOS (By similarity). In endothelial cells, induces expression of vascular endothelial growth factor (VEGF) via phosphorylation of the transcription factor SP1 by PKA in a process that is independent of NO and NO synthase. Similarly, enhances pancreatic insulin secretion through SP1-mediated transcriptional up-regulation of secretagogin/SCGN, an insulin vesicle docking protein (By similarity). Upon viral infection, relocates to mitochondria where it promotes mitochondrial fission through activation of DNM1L leading to the inhibition of innate response activation mediated by MAVS (By similarity).</text>
</comment>
<comment type="subcellular location">
    <subcellularLocation>
        <location evidence="2">Cytoplasm</location>
    </subcellularLocation>
    <subcellularLocation>
        <location evidence="2">Mitochondrion</location>
    </subcellularLocation>
    <text evidence="2">Translocates from cytosol to mitochondrion upon IL1B stimulation in chondrocytes.</text>
</comment>
<comment type="PTM">
    <text evidence="2">Phosphorylated by TBK1. Phosphorylation inhibits the translocation into the mitochondrion upon Sendai viral infection.</text>
</comment>
<comment type="similarity">
    <text evidence="5">Belongs to the DDAH family.</text>
</comment>
<comment type="caution">
    <text evidence="2">Was originally thought to be a dimethylarginine dimethylaminohydrolase (with EC:3.5.3.18) able to hydrolyze N(G),N(G)-dimethyl-L-arginine (ADMA) and N(G)-monomethyl-L-arginine (MMA) (By similarity). However, a recent multicentre study has shown that DDAH2 does not have dimethylarginine dimethylaminohydrolase activity by using different approaches (By similarity).</text>
</comment>
<dbReference type="EC" id="3.-.-.-" evidence="2"/>
<dbReference type="EMBL" id="BC104509">
    <property type="protein sequence ID" value="AAI04510.1"/>
    <property type="molecule type" value="mRNA"/>
</dbReference>
<dbReference type="RefSeq" id="NP_001029876.1">
    <property type="nucleotide sequence ID" value="NM_001034704.1"/>
</dbReference>
<dbReference type="RefSeq" id="XP_005223736.1">
    <property type="nucleotide sequence ID" value="XM_005223679.5"/>
</dbReference>
<dbReference type="SMR" id="Q3SX44"/>
<dbReference type="FunCoup" id="Q3SX44">
    <property type="interactions" value="1033"/>
</dbReference>
<dbReference type="STRING" id="9913.ENSBTAP00000017991"/>
<dbReference type="PaxDb" id="9913-ENSBTAP00000017991"/>
<dbReference type="PeptideAtlas" id="Q3SX44"/>
<dbReference type="Ensembl" id="ENSBTAT00000017991.3">
    <property type="protein sequence ID" value="ENSBTAP00000017991.2"/>
    <property type="gene ID" value="ENSBTAG00000013530.5"/>
</dbReference>
<dbReference type="GeneID" id="540386"/>
<dbReference type="KEGG" id="bta:540386"/>
<dbReference type="CTD" id="23564"/>
<dbReference type="VEuPathDB" id="HostDB:ENSBTAG00000013530"/>
<dbReference type="VGNC" id="VGNC:27940">
    <property type="gene designation" value="DDAH2"/>
</dbReference>
<dbReference type="eggNOG" id="ENOG502QW4J">
    <property type="taxonomic scope" value="Eukaryota"/>
</dbReference>
<dbReference type="GeneTree" id="ENSGT00940000160769"/>
<dbReference type="HOGENOM" id="CLU_067923_0_0_1"/>
<dbReference type="InParanoid" id="Q3SX44"/>
<dbReference type="OMA" id="KNVCSMG"/>
<dbReference type="OrthoDB" id="10016839at2759"/>
<dbReference type="TreeFam" id="TF314737"/>
<dbReference type="BRENDA" id="3.5.3.18">
    <property type="organism ID" value="908"/>
</dbReference>
<dbReference type="Proteomes" id="UP000009136">
    <property type="component" value="Chromosome 23"/>
</dbReference>
<dbReference type="Bgee" id="ENSBTAG00000013530">
    <property type="expression patterns" value="Expressed in cardiac atrium and 107 other cell types or tissues"/>
</dbReference>
<dbReference type="GO" id="GO:0005739">
    <property type="term" value="C:mitochondrion"/>
    <property type="evidence" value="ECO:0007669"/>
    <property type="project" value="UniProtKB-SubCell"/>
</dbReference>
<dbReference type="GO" id="GO:0016403">
    <property type="term" value="F:dimethylargininase activity"/>
    <property type="evidence" value="ECO:0007669"/>
    <property type="project" value="UniProtKB-EC"/>
</dbReference>
<dbReference type="GO" id="GO:0045429">
    <property type="term" value="P:positive regulation of nitric oxide biosynthetic process"/>
    <property type="evidence" value="ECO:0000314"/>
    <property type="project" value="BHF-UCL"/>
</dbReference>
<dbReference type="FunFam" id="3.75.10.10:FF:000004">
    <property type="entry name" value="N(G),N(G)-dimethylarginine dimethylaminohydrolase 1"/>
    <property type="match status" value="1"/>
</dbReference>
<dbReference type="Gene3D" id="3.75.10.10">
    <property type="entry name" value="L-arginine/glycine Amidinotransferase, Chain A"/>
    <property type="match status" value="1"/>
</dbReference>
<dbReference type="InterPro" id="IPR033199">
    <property type="entry name" value="DDAH-like"/>
</dbReference>
<dbReference type="PANTHER" id="PTHR12737">
    <property type="entry name" value="DIMETHYLARGININE DIMETHYLAMINOHYDROLASE"/>
    <property type="match status" value="1"/>
</dbReference>
<dbReference type="PANTHER" id="PTHR12737:SF16">
    <property type="entry name" value="N(G),N(G)-DIMETHYLARGININE DIMETHYLAMINOHYDROLASE 2"/>
    <property type="match status" value="1"/>
</dbReference>
<dbReference type="SUPFAM" id="SSF55909">
    <property type="entry name" value="Pentein"/>
    <property type="match status" value="1"/>
</dbReference>